<reference key="1">
    <citation type="journal article" date="2005" name="Arch. Microbiol.">
        <title>The genome sequence of an anaerobic aromatic-degrading denitrifying bacterium, strain EbN1.</title>
        <authorList>
            <person name="Rabus R."/>
            <person name="Kube M."/>
            <person name="Heider J."/>
            <person name="Beck A."/>
            <person name="Heitmann K."/>
            <person name="Widdel F."/>
            <person name="Reinhardt R."/>
        </authorList>
    </citation>
    <scope>NUCLEOTIDE SEQUENCE [LARGE SCALE GENOMIC DNA]</scope>
    <source>
        <strain>DSM 19018 / LMG 30748 / EbN1</strain>
    </source>
</reference>
<accession>Q5P102</accession>
<organism>
    <name type="scientific">Aromatoleum aromaticum (strain DSM 19018 / LMG 30748 / EbN1)</name>
    <name type="common">Azoarcus sp. (strain EbN1)</name>
    <dbReference type="NCBI Taxonomy" id="76114"/>
    <lineage>
        <taxon>Bacteria</taxon>
        <taxon>Pseudomonadati</taxon>
        <taxon>Pseudomonadota</taxon>
        <taxon>Betaproteobacteria</taxon>
        <taxon>Rhodocyclales</taxon>
        <taxon>Rhodocyclaceae</taxon>
        <taxon>Aromatoleum</taxon>
    </lineage>
</organism>
<proteinExistence type="inferred from homology"/>
<evidence type="ECO:0000255" key="1">
    <source>
        <dbReference type="HAMAP-Rule" id="MF_00500"/>
    </source>
</evidence>
<evidence type="ECO:0000305" key="2"/>
<keyword id="KW-1185">Reference proteome</keyword>
<keyword id="KW-0687">Ribonucleoprotein</keyword>
<keyword id="KW-0689">Ribosomal protein</keyword>
<keyword id="KW-0694">RNA-binding</keyword>
<keyword id="KW-0699">rRNA-binding</keyword>
<name>RS20_AROAE</name>
<sequence>MANSAQARKRARQAVVARAHNGSLRSRLRTAIKAVQKAVVGGDKAAAQATFRTSMSTIDSIADKKIIHKNKAARHKSRLSAAIKAMTA</sequence>
<comment type="function">
    <text evidence="1">Binds directly to 16S ribosomal RNA.</text>
</comment>
<comment type="similarity">
    <text evidence="1">Belongs to the bacterial ribosomal protein bS20 family.</text>
</comment>
<gene>
    <name evidence="1" type="primary">rpsT</name>
    <name type="ordered locus">AZOSEA28870</name>
    <name type="ORF">ebB177</name>
</gene>
<dbReference type="EMBL" id="CR555306">
    <property type="protein sequence ID" value="CAI09012.1"/>
    <property type="molecule type" value="Genomic_DNA"/>
</dbReference>
<dbReference type="RefSeq" id="WP_011238693.1">
    <property type="nucleotide sequence ID" value="NC_006513.1"/>
</dbReference>
<dbReference type="SMR" id="Q5P102"/>
<dbReference type="STRING" id="76114.ebB177"/>
<dbReference type="KEGG" id="eba:ebB177"/>
<dbReference type="eggNOG" id="COG0268">
    <property type="taxonomic scope" value="Bacteria"/>
</dbReference>
<dbReference type="HOGENOM" id="CLU_160655_4_0_4"/>
<dbReference type="OrthoDB" id="9807974at2"/>
<dbReference type="Proteomes" id="UP000006552">
    <property type="component" value="Chromosome"/>
</dbReference>
<dbReference type="GO" id="GO:0005829">
    <property type="term" value="C:cytosol"/>
    <property type="evidence" value="ECO:0007669"/>
    <property type="project" value="TreeGrafter"/>
</dbReference>
<dbReference type="GO" id="GO:0015935">
    <property type="term" value="C:small ribosomal subunit"/>
    <property type="evidence" value="ECO:0007669"/>
    <property type="project" value="TreeGrafter"/>
</dbReference>
<dbReference type="GO" id="GO:0070181">
    <property type="term" value="F:small ribosomal subunit rRNA binding"/>
    <property type="evidence" value="ECO:0007669"/>
    <property type="project" value="TreeGrafter"/>
</dbReference>
<dbReference type="GO" id="GO:0003735">
    <property type="term" value="F:structural constituent of ribosome"/>
    <property type="evidence" value="ECO:0007669"/>
    <property type="project" value="InterPro"/>
</dbReference>
<dbReference type="GO" id="GO:0006412">
    <property type="term" value="P:translation"/>
    <property type="evidence" value="ECO:0007669"/>
    <property type="project" value="UniProtKB-UniRule"/>
</dbReference>
<dbReference type="FunFam" id="1.20.58.110:FF:000001">
    <property type="entry name" value="30S ribosomal protein S20"/>
    <property type="match status" value="1"/>
</dbReference>
<dbReference type="Gene3D" id="1.20.58.110">
    <property type="entry name" value="Ribosomal protein S20"/>
    <property type="match status" value="1"/>
</dbReference>
<dbReference type="HAMAP" id="MF_00500">
    <property type="entry name" value="Ribosomal_bS20"/>
    <property type="match status" value="1"/>
</dbReference>
<dbReference type="InterPro" id="IPR002583">
    <property type="entry name" value="Ribosomal_bS20"/>
</dbReference>
<dbReference type="InterPro" id="IPR036510">
    <property type="entry name" value="Ribosomal_bS20_sf"/>
</dbReference>
<dbReference type="NCBIfam" id="TIGR00029">
    <property type="entry name" value="S20"/>
    <property type="match status" value="1"/>
</dbReference>
<dbReference type="PANTHER" id="PTHR33398">
    <property type="entry name" value="30S RIBOSOMAL PROTEIN S20"/>
    <property type="match status" value="1"/>
</dbReference>
<dbReference type="PANTHER" id="PTHR33398:SF1">
    <property type="entry name" value="SMALL RIBOSOMAL SUBUNIT PROTEIN BS20C"/>
    <property type="match status" value="1"/>
</dbReference>
<dbReference type="Pfam" id="PF01649">
    <property type="entry name" value="Ribosomal_S20p"/>
    <property type="match status" value="1"/>
</dbReference>
<dbReference type="SUPFAM" id="SSF46992">
    <property type="entry name" value="Ribosomal protein S20"/>
    <property type="match status" value="1"/>
</dbReference>
<feature type="chain" id="PRO_0000167909" description="Small ribosomal subunit protein bS20">
    <location>
        <begin position="1"/>
        <end position="88"/>
    </location>
</feature>
<protein>
    <recommendedName>
        <fullName evidence="1">Small ribosomal subunit protein bS20</fullName>
    </recommendedName>
    <alternativeName>
        <fullName evidence="2">30S ribosomal protein S20</fullName>
    </alternativeName>
</protein>